<protein>
    <recommendedName>
        <fullName>Profilin-A</fullName>
    </recommendedName>
</protein>
<reference key="1">
    <citation type="submission" date="2000-10" db="EMBL/GenBank/DDBJ databases">
        <title>Molecular cloning and characterization of rice pollen profilin gene.</title>
        <authorList>
            <person name="Ye Q."/>
            <person name="Xu Y."/>
            <person name="Yan F."/>
            <person name="Tang L."/>
            <person name="Chen F."/>
        </authorList>
    </citation>
    <scope>NUCLEOTIDE SEQUENCE [MRNA]</scope>
    <source>
        <tissue>Pollen</tissue>
    </source>
</reference>
<reference key="2">
    <citation type="journal article" date="2003" name="Science">
        <title>In-depth view of structure, activity, and evolution of rice chromosome 10.</title>
        <authorList>
            <person name="Yu Y."/>
            <person name="Rambo T."/>
            <person name="Currie J."/>
            <person name="Saski C."/>
            <person name="Kim H.-R."/>
            <person name="Collura K."/>
            <person name="Thompson S."/>
            <person name="Simmons J."/>
            <person name="Yang T.-J."/>
            <person name="Nah G."/>
            <person name="Patel A.J."/>
            <person name="Thurmond S."/>
            <person name="Henry D."/>
            <person name="Oates R."/>
            <person name="Palmer M."/>
            <person name="Pries G."/>
            <person name="Gibson J."/>
            <person name="Anderson H."/>
            <person name="Paradkar M."/>
            <person name="Crane L."/>
            <person name="Dale J."/>
            <person name="Carver M.B."/>
            <person name="Wood T."/>
            <person name="Frisch D."/>
            <person name="Engler F."/>
            <person name="Soderlund C."/>
            <person name="Palmer L.E."/>
            <person name="Teytelman L."/>
            <person name="Nascimento L."/>
            <person name="De la Bastide M."/>
            <person name="Spiegel L."/>
            <person name="Ware D."/>
            <person name="O'Shaughnessy A."/>
            <person name="Dike S."/>
            <person name="Dedhia N."/>
            <person name="Preston R."/>
            <person name="Huang E."/>
            <person name="Ferraro K."/>
            <person name="Kuit K."/>
            <person name="Miller B."/>
            <person name="Zutavern T."/>
            <person name="Katzenberger F."/>
            <person name="Muller S."/>
            <person name="Balija V."/>
            <person name="Martienssen R.A."/>
            <person name="Stein L."/>
            <person name="Minx P."/>
            <person name="Johnson D."/>
            <person name="Cordum H."/>
            <person name="Mardis E."/>
            <person name="Cheng Z."/>
            <person name="Jiang J."/>
            <person name="Wilson R."/>
            <person name="McCombie W.R."/>
            <person name="Wing R.A."/>
            <person name="Yuan Q."/>
            <person name="Ouyang S."/>
            <person name="Liu J."/>
            <person name="Jones K.M."/>
            <person name="Gansberger K."/>
            <person name="Moffat K."/>
            <person name="Hill J."/>
            <person name="Tsitrin T."/>
            <person name="Overton L."/>
            <person name="Bera J."/>
            <person name="Kim M."/>
            <person name="Jin S."/>
            <person name="Tallon L."/>
            <person name="Ciecko A."/>
            <person name="Pai G."/>
            <person name="Van Aken S."/>
            <person name="Utterback T."/>
            <person name="Reidmuller S."/>
            <person name="Bormann J."/>
            <person name="Feldblyum T."/>
            <person name="Hsiao J."/>
            <person name="Zismann V."/>
            <person name="Blunt S."/>
            <person name="de Vazeille A.R."/>
            <person name="Shaffer T."/>
            <person name="Koo H."/>
            <person name="Suh B."/>
            <person name="Yang Q."/>
            <person name="Haas B."/>
            <person name="Peterson J."/>
            <person name="Pertea M."/>
            <person name="Volfovsky N."/>
            <person name="Wortman J."/>
            <person name="White O."/>
            <person name="Salzberg S.L."/>
            <person name="Fraser C.M."/>
            <person name="Buell C.R."/>
            <person name="Messing J."/>
            <person name="Song R."/>
            <person name="Fuks G."/>
            <person name="Llaca V."/>
            <person name="Kovchak S."/>
            <person name="Young S."/>
            <person name="Bowers J.E."/>
            <person name="Paterson A.H."/>
            <person name="Johns M.A."/>
            <person name="Mao L."/>
            <person name="Pan H."/>
            <person name="Dean R.A."/>
        </authorList>
    </citation>
    <scope>NUCLEOTIDE SEQUENCE [LARGE SCALE GENOMIC DNA]</scope>
    <source>
        <strain>cv. Nipponbare</strain>
    </source>
</reference>
<reference key="3">
    <citation type="journal article" date="2005" name="Nature">
        <title>The map-based sequence of the rice genome.</title>
        <authorList>
            <consortium name="International rice genome sequencing project (IRGSP)"/>
        </authorList>
    </citation>
    <scope>NUCLEOTIDE SEQUENCE [LARGE SCALE GENOMIC DNA]</scope>
    <source>
        <strain>cv. Nipponbare</strain>
    </source>
</reference>
<reference key="4">
    <citation type="journal article" date="2008" name="Nucleic Acids Res.">
        <title>The rice annotation project database (RAP-DB): 2008 update.</title>
        <authorList>
            <consortium name="The rice annotation project (RAP)"/>
        </authorList>
    </citation>
    <scope>GENOME REANNOTATION</scope>
    <source>
        <strain>cv. Nipponbare</strain>
    </source>
</reference>
<reference key="5">
    <citation type="journal article" date="2013" name="Rice">
        <title>Improvement of the Oryza sativa Nipponbare reference genome using next generation sequence and optical map data.</title>
        <authorList>
            <person name="Kawahara Y."/>
            <person name="de la Bastide M."/>
            <person name="Hamilton J.P."/>
            <person name="Kanamori H."/>
            <person name="McCombie W.R."/>
            <person name="Ouyang S."/>
            <person name="Schwartz D.C."/>
            <person name="Tanaka T."/>
            <person name="Wu J."/>
            <person name="Zhou S."/>
            <person name="Childs K.L."/>
            <person name="Davidson R.M."/>
            <person name="Lin H."/>
            <person name="Quesada-Ocampo L."/>
            <person name="Vaillancourt B."/>
            <person name="Sakai H."/>
            <person name="Lee S.S."/>
            <person name="Kim J."/>
            <person name="Numa H."/>
            <person name="Itoh T."/>
            <person name="Buell C.R."/>
            <person name="Matsumoto T."/>
        </authorList>
    </citation>
    <scope>GENOME REANNOTATION</scope>
    <source>
        <strain>cv. Nipponbare</strain>
    </source>
</reference>
<reference key="6">
    <citation type="journal article" date="2005" name="PLoS Biol.">
        <title>The genomes of Oryza sativa: a history of duplications.</title>
        <authorList>
            <person name="Yu J."/>
            <person name="Wang J."/>
            <person name="Lin W."/>
            <person name="Li S."/>
            <person name="Li H."/>
            <person name="Zhou J."/>
            <person name="Ni P."/>
            <person name="Dong W."/>
            <person name="Hu S."/>
            <person name="Zeng C."/>
            <person name="Zhang J."/>
            <person name="Zhang Y."/>
            <person name="Li R."/>
            <person name="Xu Z."/>
            <person name="Li S."/>
            <person name="Li X."/>
            <person name="Zheng H."/>
            <person name="Cong L."/>
            <person name="Lin L."/>
            <person name="Yin J."/>
            <person name="Geng J."/>
            <person name="Li G."/>
            <person name="Shi J."/>
            <person name="Liu J."/>
            <person name="Lv H."/>
            <person name="Li J."/>
            <person name="Wang J."/>
            <person name="Deng Y."/>
            <person name="Ran L."/>
            <person name="Shi X."/>
            <person name="Wang X."/>
            <person name="Wu Q."/>
            <person name="Li C."/>
            <person name="Ren X."/>
            <person name="Wang J."/>
            <person name="Wang X."/>
            <person name="Li D."/>
            <person name="Liu D."/>
            <person name="Zhang X."/>
            <person name="Ji Z."/>
            <person name="Zhao W."/>
            <person name="Sun Y."/>
            <person name="Zhang Z."/>
            <person name="Bao J."/>
            <person name="Han Y."/>
            <person name="Dong L."/>
            <person name="Ji J."/>
            <person name="Chen P."/>
            <person name="Wu S."/>
            <person name="Liu J."/>
            <person name="Xiao Y."/>
            <person name="Bu D."/>
            <person name="Tan J."/>
            <person name="Yang L."/>
            <person name="Ye C."/>
            <person name="Zhang J."/>
            <person name="Xu J."/>
            <person name="Zhou Y."/>
            <person name="Yu Y."/>
            <person name="Zhang B."/>
            <person name="Zhuang S."/>
            <person name="Wei H."/>
            <person name="Liu B."/>
            <person name="Lei M."/>
            <person name="Yu H."/>
            <person name="Li Y."/>
            <person name="Xu H."/>
            <person name="Wei S."/>
            <person name="He X."/>
            <person name="Fang L."/>
            <person name="Zhang Z."/>
            <person name="Zhang Y."/>
            <person name="Huang X."/>
            <person name="Su Z."/>
            <person name="Tong W."/>
            <person name="Li J."/>
            <person name="Tong Z."/>
            <person name="Li S."/>
            <person name="Ye J."/>
            <person name="Wang L."/>
            <person name="Fang L."/>
            <person name="Lei T."/>
            <person name="Chen C.-S."/>
            <person name="Chen H.-C."/>
            <person name="Xu Z."/>
            <person name="Li H."/>
            <person name="Huang H."/>
            <person name="Zhang F."/>
            <person name="Xu H."/>
            <person name="Li N."/>
            <person name="Zhao C."/>
            <person name="Li S."/>
            <person name="Dong L."/>
            <person name="Huang Y."/>
            <person name="Li L."/>
            <person name="Xi Y."/>
            <person name="Qi Q."/>
            <person name="Li W."/>
            <person name="Zhang B."/>
            <person name="Hu W."/>
            <person name="Zhang Y."/>
            <person name="Tian X."/>
            <person name="Jiao Y."/>
            <person name="Liang X."/>
            <person name="Jin J."/>
            <person name="Gao L."/>
            <person name="Zheng W."/>
            <person name="Hao B."/>
            <person name="Liu S.-M."/>
            <person name="Wang W."/>
            <person name="Yuan L."/>
            <person name="Cao M."/>
            <person name="McDermott J."/>
            <person name="Samudrala R."/>
            <person name="Wang J."/>
            <person name="Wong G.K.-S."/>
            <person name="Yang H."/>
        </authorList>
    </citation>
    <scope>NUCLEOTIDE SEQUENCE [LARGE SCALE GENOMIC DNA]</scope>
    <source>
        <strain>cv. Nipponbare</strain>
    </source>
</reference>
<reference key="7">
    <citation type="journal article" date="2003" name="Science">
        <title>Collection, mapping, and annotation of over 28,000 cDNA clones from japonica rice.</title>
        <authorList>
            <consortium name="The rice full-length cDNA consortium"/>
        </authorList>
    </citation>
    <scope>NUCLEOTIDE SEQUENCE [LARGE SCALE MRNA] (OS10G0323900)</scope>
    <source>
        <strain>cv. Nipponbare</strain>
    </source>
</reference>
<gene>
    <name type="ordered locus">Os10g0323600</name>
    <name type="ordered locus">LOC_Os10g17660</name>
    <name type="ORF">OSJNBa0065C16.11</name>
</gene>
<gene>
    <name type="ordered locus">Os10g0323900</name>
    <name type="ordered locus">LOC_Os10g17680</name>
    <name type="ORF">OSJNBa0065C16.14</name>
</gene>
<evidence type="ECO:0000250" key="1"/>
<evidence type="ECO:0000305" key="2"/>
<dbReference type="EMBL" id="AF310253">
    <property type="protein sequence ID" value="AAG32056.1"/>
    <property type="molecule type" value="mRNA"/>
</dbReference>
<dbReference type="EMBL" id="AC074354">
    <property type="protein sequence ID" value="AAK92577.1"/>
    <property type="molecule type" value="Genomic_DNA"/>
</dbReference>
<dbReference type="EMBL" id="AC074354">
    <property type="protein sequence ID" value="AAK92580.1"/>
    <property type="molecule type" value="Genomic_DNA"/>
</dbReference>
<dbReference type="EMBL" id="DP000086">
    <property type="protein sequence ID" value="AAP52954.1"/>
    <property type="molecule type" value="Genomic_DNA"/>
</dbReference>
<dbReference type="EMBL" id="DP000086">
    <property type="protein sequence ID" value="AAP52957.1"/>
    <property type="molecule type" value="Genomic_DNA"/>
</dbReference>
<dbReference type="EMBL" id="AP008216">
    <property type="protein sequence ID" value="BAF26262.1"/>
    <property type="molecule type" value="Genomic_DNA"/>
</dbReference>
<dbReference type="EMBL" id="AP008216">
    <property type="protein sequence ID" value="BAF26263.1"/>
    <property type="molecule type" value="Genomic_DNA"/>
</dbReference>
<dbReference type="EMBL" id="AP014966">
    <property type="protein sequence ID" value="BAT10321.1"/>
    <property type="molecule type" value="Genomic_DNA"/>
</dbReference>
<dbReference type="EMBL" id="AP014966">
    <property type="protein sequence ID" value="BAT10322.1"/>
    <property type="molecule type" value="Genomic_DNA"/>
</dbReference>
<dbReference type="EMBL" id="CM000147">
    <property type="protein sequence ID" value="EAZ15650.1"/>
    <property type="molecule type" value="Genomic_DNA"/>
</dbReference>
<dbReference type="EMBL" id="CM000147">
    <property type="protein sequence ID" value="EAZ15648.1"/>
    <property type="molecule type" value="Genomic_DNA"/>
</dbReference>
<dbReference type="EMBL" id="AK100089">
    <property type="protein sequence ID" value="BAG94438.1"/>
    <property type="molecule type" value="mRNA"/>
</dbReference>
<dbReference type="RefSeq" id="XP_015613794.1">
    <property type="nucleotide sequence ID" value="XM_015758308.1"/>
</dbReference>
<dbReference type="SMR" id="Q9FUD1"/>
<dbReference type="FunCoup" id="Q9FUD1">
    <property type="interactions" value="656"/>
</dbReference>
<dbReference type="STRING" id="39947.Q9FUD1"/>
<dbReference type="Allergome" id="3395">
    <property type="allergen name" value="Ory s 12.0101"/>
</dbReference>
<dbReference type="Allergome" id="996">
    <property type="allergen name" value="Ory s 12"/>
</dbReference>
<dbReference type="PaxDb" id="39947-Q9FUD1"/>
<dbReference type="EnsemblPlants" id="Os10t0323600-01">
    <property type="protein sequence ID" value="Os10t0323600-01"/>
    <property type="gene ID" value="Os10g0323600"/>
</dbReference>
<dbReference type="EnsemblPlants" id="Os10t0323900-01">
    <property type="protein sequence ID" value="Os10t0323900-01"/>
    <property type="gene ID" value="Os10g0323900"/>
</dbReference>
<dbReference type="Gramene" id="Os10t0323600-01">
    <property type="protein sequence ID" value="Os10t0323600-01"/>
    <property type="gene ID" value="Os10g0323600"/>
</dbReference>
<dbReference type="Gramene" id="Os10t0323900-01">
    <property type="protein sequence ID" value="Os10t0323900-01"/>
    <property type="gene ID" value="Os10g0323900"/>
</dbReference>
<dbReference type="KEGG" id="dosa:Os10g0323600"/>
<dbReference type="KEGG" id="dosa:Os10g0323900"/>
<dbReference type="KEGG" id="osa:4348316"/>
<dbReference type="KEGG" id="osa:4348317"/>
<dbReference type="eggNOG" id="KOG1755">
    <property type="taxonomic scope" value="Eukaryota"/>
</dbReference>
<dbReference type="HOGENOM" id="CLU_120772_0_1_1"/>
<dbReference type="InParanoid" id="Q9FUD1"/>
<dbReference type="OMA" id="SHCHIVA"/>
<dbReference type="OrthoDB" id="421374at2759"/>
<dbReference type="Proteomes" id="UP000000763">
    <property type="component" value="Chromosome 10"/>
</dbReference>
<dbReference type="Proteomes" id="UP000007752">
    <property type="component" value="Chromosome 10"/>
</dbReference>
<dbReference type="Proteomes" id="UP000059680">
    <property type="component" value="Chromosome 10"/>
</dbReference>
<dbReference type="ExpressionAtlas" id="Q9FUD1">
    <property type="expression patterns" value="baseline and differential"/>
</dbReference>
<dbReference type="GO" id="GO:0005938">
    <property type="term" value="C:cell cortex"/>
    <property type="evidence" value="ECO:0000318"/>
    <property type="project" value="GO_Central"/>
</dbReference>
<dbReference type="GO" id="GO:0005856">
    <property type="term" value="C:cytoskeleton"/>
    <property type="evidence" value="ECO:0007669"/>
    <property type="project" value="UniProtKB-SubCell"/>
</dbReference>
<dbReference type="GO" id="GO:0003785">
    <property type="term" value="F:actin monomer binding"/>
    <property type="evidence" value="ECO:0000318"/>
    <property type="project" value="GO_Central"/>
</dbReference>
<dbReference type="CDD" id="cd00148">
    <property type="entry name" value="PROF"/>
    <property type="match status" value="1"/>
</dbReference>
<dbReference type="FunFam" id="3.30.450.30:FF:000001">
    <property type="entry name" value="Profilin"/>
    <property type="match status" value="1"/>
</dbReference>
<dbReference type="Gene3D" id="3.30.450.30">
    <property type="entry name" value="Dynein light chain 2a, cytoplasmic"/>
    <property type="match status" value="1"/>
</dbReference>
<dbReference type="InterPro" id="IPR048278">
    <property type="entry name" value="PFN"/>
</dbReference>
<dbReference type="InterPro" id="IPR005455">
    <property type="entry name" value="PFN_euk"/>
</dbReference>
<dbReference type="InterPro" id="IPR036140">
    <property type="entry name" value="PFN_sf"/>
</dbReference>
<dbReference type="InterPro" id="IPR027310">
    <property type="entry name" value="Profilin_CS"/>
</dbReference>
<dbReference type="PANTHER" id="PTHR11604">
    <property type="entry name" value="PROFILIN"/>
    <property type="match status" value="1"/>
</dbReference>
<dbReference type="PANTHER" id="PTHR11604:SF51">
    <property type="entry name" value="PROFILIN-A"/>
    <property type="match status" value="1"/>
</dbReference>
<dbReference type="Pfam" id="PF00235">
    <property type="entry name" value="Profilin"/>
    <property type="match status" value="1"/>
</dbReference>
<dbReference type="PRINTS" id="PR00392">
    <property type="entry name" value="PROFILIN"/>
</dbReference>
<dbReference type="PRINTS" id="PR01640">
    <property type="entry name" value="PROFILINPLNT"/>
</dbReference>
<dbReference type="SMART" id="SM00392">
    <property type="entry name" value="PROF"/>
    <property type="match status" value="1"/>
</dbReference>
<dbReference type="SUPFAM" id="SSF55770">
    <property type="entry name" value="Profilin (actin-binding protein)"/>
    <property type="match status" value="1"/>
</dbReference>
<dbReference type="PROSITE" id="PS00414">
    <property type="entry name" value="PROFILIN"/>
    <property type="match status" value="1"/>
</dbReference>
<feature type="initiator methionine" description="Removed" evidence="1">
    <location>
        <position position="1"/>
    </location>
</feature>
<feature type="chain" id="PRO_0000199659" description="Profilin-A">
    <location>
        <begin position="2"/>
        <end position="131"/>
    </location>
</feature>
<comment type="function">
    <text evidence="1">Binds to actin and affects the structure of the cytoskeleton. At high concentrations, profilin prevents the polymerization of actin, whereas it enhances it at low concentrations. By binding to PIP2, it inhibits the formation of IP3 and DG (By similarity). May serve as a modulator in pollen germination and pollen tube growth.</text>
</comment>
<comment type="subunit">
    <text>Occurs in many kinds of cells as a complex with monomeric actin in a 1:1 ratio.</text>
</comment>
<comment type="subcellular location">
    <subcellularLocation>
        <location>Cytoplasm</location>
        <location>Cytoskeleton</location>
    </subcellularLocation>
</comment>
<comment type="similarity">
    <text evidence="2">Belongs to the profilin family.</text>
</comment>
<keyword id="KW-0009">Actin-binding</keyword>
<keyword id="KW-0963">Cytoplasm</keyword>
<keyword id="KW-0206">Cytoskeleton</keyword>
<keyword id="KW-1185">Reference proteome</keyword>
<sequence length="131" mass="14243">MSWQTYVDEHLMCEIEGHHLTSAAIVGHDGTVWAQSAAFPQFKPEEMTNIMKDFDEPGFLAPTGLFLGPTKYMVIQGEPGAVIRGKKGSGGITVKKTGQALVVGIYDEPMTPGQCNMVVERLGDYLVEQGL</sequence>
<name>PROFA_ORYSJ</name>
<proteinExistence type="evidence at transcript level"/>
<accession>Q9FUD1</accession>
<accession>A3C3I5</accession>
<accession>Q0IYF2</accession>
<accession>Q7G3W8</accession>
<accession>Q7G7Y1</accession>
<organism>
    <name type="scientific">Oryza sativa subsp. japonica</name>
    <name type="common">Rice</name>
    <dbReference type="NCBI Taxonomy" id="39947"/>
    <lineage>
        <taxon>Eukaryota</taxon>
        <taxon>Viridiplantae</taxon>
        <taxon>Streptophyta</taxon>
        <taxon>Embryophyta</taxon>
        <taxon>Tracheophyta</taxon>
        <taxon>Spermatophyta</taxon>
        <taxon>Magnoliopsida</taxon>
        <taxon>Liliopsida</taxon>
        <taxon>Poales</taxon>
        <taxon>Poaceae</taxon>
        <taxon>BOP clade</taxon>
        <taxon>Oryzoideae</taxon>
        <taxon>Oryzeae</taxon>
        <taxon>Oryzinae</taxon>
        <taxon>Oryza</taxon>
        <taxon>Oryza sativa</taxon>
    </lineage>
</organism>